<name>RF3_GEOSL</name>
<evidence type="ECO:0000255" key="1">
    <source>
        <dbReference type="HAMAP-Rule" id="MF_00072"/>
    </source>
</evidence>
<feature type="chain" id="PRO_0000242180" description="Peptide chain release factor 3">
    <location>
        <begin position="1"/>
        <end position="526"/>
    </location>
</feature>
<feature type="domain" description="tr-type G">
    <location>
        <begin position="9"/>
        <end position="277"/>
    </location>
</feature>
<feature type="binding site" evidence="1">
    <location>
        <begin position="18"/>
        <end position="25"/>
    </location>
    <ligand>
        <name>GTP</name>
        <dbReference type="ChEBI" id="CHEBI:37565"/>
    </ligand>
</feature>
<feature type="binding site" evidence="1">
    <location>
        <begin position="86"/>
        <end position="90"/>
    </location>
    <ligand>
        <name>GTP</name>
        <dbReference type="ChEBI" id="CHEBI:37565"/>
    </ligand>
</feature>
<feature type="binding site" evidence="1">
    <location>
        <begin position="140"/>
        <end position="143"/>
    </location>
    <ligand>
        <name>GTP</name>
        <dbReference type="ChEBI" id="CHEBI:37565"/>
    </ligand>
</feature>
<accession>Q74GV6</accession>
<protein>
    <recommendedName>
        <fullName evidence="1">Peptide chain release factor 3</fullName>
        <shortName evidence="1">RF-3</shortName>
    </recommendedName>
</protein>
<comment type="function">
    <text evidence="1">Increases the formation of ribosomal termination complexes and stimulates activities of RF-1 and RF-2. It binds guanine nucleotides and has strong preference for UGA stop codons. It may interact directly with the ribosome. The stimulation of RF-1 and RF-2 is significantly reduced by GTP and GDP, but not by GMP.</text>
</comment>
<comment type="subcellular location">
    <subcellularLocation>
        <location evidence="1">Cytoplasm</location>
    </subcellularLocation>
</comment>
<comment type="similarity">
    <text evidence="1">Belongs to the TRAFAC class translation factor GTPase superfamily. Classic translation factor GTPase family. PrfC subfamily.</text>
</comment>
<reference key="1">
    <citation type="journal article" date="2003" name="Science">
        <title>Genome of Geobacter sulfurreducens: metal reduction in subsurface environments.</title>
        <authorList>
            <person name="Methe B.A."/>
            <person name="Nelson K.E."/>
            <person name="Eisen J.A."/>
            <person name="Paulsen I.T."/>
            <person name="Nelson W.C."/>
            <person name="Heidelberg J.F."/>
            <person name="Wu D."/>
            <person name="Wu M."/>
            <person name="Ward N.L."/>
            <person name="Beanan M.J."/>
            <person name="Dodson R.J."/>
            <person name="Madupu R."/>
            <person name="Brinkac L.M."/>
            <person name="Daugherty S.C."/>
            <person name="DeBoy R.T."/>
            <person name="Durkin A.S."/>
            <person name="Gwinn M.L."/>
            <person name="Kolonay J.F."/>
            <person name="Sullivan S.A."/>
            <person name="Haft D.H."/>
            <person name="Selengut J."/>
            <person name="Davidsen T.M."/>
            <person name="Zafar N."/>
            <person name="White O."/>
            <person name="Tran B."/>
            <person name="Romero C."/>
            <person name="Forberger H.A."/>
            <person name="Weidman J.F."/>
            <person name="Khouri H.M."/>
            <person name="Feldblyum T.V."/>
            <person name="Utterback T.R."/>
            <person name="Van Aken S.E."/>
            <person name="Lovley D.R."/>
            <person name="Fraser C.M."/>
        </authorList>
    </citation>
    <scope>NUCLEOTIDE SEQUENCE [LARGE SCALE GENOMIC DNA]</scope>
    <source>
        <strain>ATCC 51573 / DSM 12127 / PCA</strain>
    </source>
</reference>
<gene>
    <name evidence="1" type="primary">prfC</name>
    <name type="ordered locus">GSU0138</name>
</gene>
<sequence>MKYNEQEVDRRRTFAIVSHPDAGKTTITEKLLLFGGAIQQAGEVRARKAARHATSDWMEMEKQRGISVTSSVMKFTYRDYEVNLLDTPGHNDFSEDTYRVLTAVDSALMVIDSVKGVESQTIKLLDVCRLRHTPIMTFINKLDREGRDPFELIDEIEKVLRIQCAPMTWPIGMGKRFRGTYHLYTKELVIFDAEAERGTGGVISMTGLDDPQLDELLGSQADELRADVELLEGAAHPFEEEAYHAGLQTPVFFGSAINTFGVQQLLDTFVDHAPAPLPREAVSRTVSPYEEPFTAFAFKIQANMDPAHRDRIAFFRICSGKFTRGMKVRHVRLGREVAINNATIFMAQDRTHVDEAFPGDIIGIHNHGTIKIGDTFTLGEDIKFTGIPNFAPEHFRRVRLLDPLKSKALEKGLTQLAEEGTTQVFRPLMGADWVVGAVGLLQFDVVMHRLEHEYNVKATYEPVSYVTARWVTGEKKKVEEFQKKEVMNCYIDGEGDLAYLAGSQWRLDNTMDNWKDLTFHATREHS</sequence>
<dbReference type="EMBL" id="AE017180">
    <property type="protein sequence ID" value="AAR33473.1"/>
    <property type="molecule type" value="Genomic_DNA"/>
</dbReference>
<dbReference type="RefSeq" id="NP_951200.1">
    <property type="nucleotide sequence ID" value="NC_002939.5"/>
</dbReference>
<dbReference type="RefSeq" id="WP_010940814.1">
    <property type="nucleotide sequence ID" value="NC_002939.5"/>
</dbReference>
<dbReference type="SMR" id="Q74GV6"/>
<dbReference type="FunCoup" id="Q74GV6">
    <property type="interactions" value="238"/>
</dbReference>
<dbReference type="STRING" id="243231.GSU0138"/>
<dbReference type="EnsemblBacteria" id="AAR33473">
    <property type="protein sequence ID" value="AAR33473"/>
    <property type="gene ID" value="GSU0138"/>
</dbReference>
<dbReference type="KEGG" id="gsu:GSU0138"/>
<dbReference type="PATRIC" id="fig|243231.5.peg.139"/>
<dbReference type="eggNOG" id="COG4108">
    <property type="taxonomic scope" value="Bacteria"/>
</dbReference>
<dbReference type="HOGENOM" id="CLU_002794_2_1_7"/>
<dbReference type="InParanoid" id="Q74GV6"/>
<dbReference type="OrthoDB" id="9801591at2"/>
<dbReference type="Proteomes" id="UP000000577">
    <property type="component" value="Chromosome"/>
</dbReference>
<dbReference type="GO" id="GO:0005829">
    <property type="term" value="C:cytosol"/>
    <property type="evidence" value="ECO:0000318"/>
    <property type="project" value="GO_Central"/>
</dbReference>
<dbReference type="GO" id="GO:0005525">
    <property type="term" value="F:GTP binding"/>
    <property type="evidence" value="ECO:0007669"/>
    <property type="project" value="UniProtKB-UniRule"/>
</dbReference>
<dbReference type="GO" id="GO:0003924">
    <property type="term" value="F:GTPase activity"/>
    <property type="evidence" value="ECO:0007669"/>
    <property type="project" value="InterPro"/>
</dbReference>
<dbReference type="GO" id="GO:0016150">
    <property type="term" value="F:translation release factor activity, codon nonspecific"/>
    <property type="evidence" value="ECO:0000318"/>
    <property type="project" value="GO_Central"/>
</dbReference>
<dbReference type="GO" id="GO:0016149">
    <property type="term" value="F:translation release factor activity, codon specific"/>
    <property type="evidence" value="ECO:0007669"/>
    <property type="project" value="UniProtKB-UniRule"/>
</dbReference>
<dbReference type="GO" id="GO:0006449">
    <property type="term" value="P:regulation of translational termination"/>
    <property type="evidence" value="ECO:0007669"/>
    <property type="project" value="UniProtKB-UniRule"/>
</dbReference>
<dbReference type="GO" id="GO:0006415">
    <property type="term" value="P:translational termination"/>
    <property type="evidence" value="ECO:0000318"/>
    <property type="project" value="GO_Central"/>
</dbReference>
<dbReference type="CDD" id="cd04169">
    <property type="entry name" value="RF3"/>
    <property type="match status" value="1"/>
</dbReference>
<dbReference type="CDD" id="cd03689">
    <property type="entry name" value="RF3_II"/>
    <property type="match status" value="1"/>
</dbReference>
<dbReference type="CDD" id="cd16259">
    <property type="entry name" value="RF3_III"/>
    <property type="match status" value="1"/>
</dbReference>
<dbReference type="FunFam" id="3.30.70.3280:FF:000001">
    <property type="entry name" value="Peptide chain release factor 3"/>
    <property type="match status" value="1"/>
</dbReference>
<dbReference type="FunFam" id="3.40.50.300:FF:000542">
    <property type="entry name" value="Peptide chain release factor 3"/>
    <property type="match status" value="1"/>
</dbReference>
<dbReference type="Gene3D" id="3.40.50.300">
    <property type="entry name" value="P-loop containing nucleotide triphosphate hydrolases"/>
    <property type="match status" value="2"/>
</dbReference>
<dbReference type="Gene3D" id="3.30.70.3280">
    <property type="entry name" value="Peptide chain release factor 3, domain III"/>
    <property type="match status" value="1"/>
</dbReference>
<dbReference type="HAMAP" id="MF_00072">
    <property type="entry name" value="Rel_fac_3"/>
    <property type="match status" value="1"/>
</dbReference>
<dbReference type="InterPro" id="IPR053905">
    <property type="entry name" value="EF-G-like_DII"/>
</dbReference>
<dbReference type="InterPro" id="IPR035647">
    <property type="entry name" value="EFG_III/V"/>
</dbReference>
<dbReference type="InterPro" id="IPR031157">
    <property type="entry name" value="G_TR_CS"/>
</dbReference>
<dbReference type="InterPro" id="IPR027417">
    <property type="entry name" value="P-loop_NTPase"/>
</dbReference>
<dbReference type="InterPro" id="IPR004548">
    <property type="entry name" value="PrfC"/>
</dbReference>
<dbReference type="InterPro" id="IPR032090">
    <property type="entry name" value="RF3_C"/>
</dbReference>
<dbReference type="InterPro" id="IPR038467">
    <property type="entry name" value="RF3_dom_3_sf"/>
</dbReference>
<dbReference type="InterPro" id="IPR041732">
    <property type="entry name" value="RF3_GTP-bd"/>
</dbReference>
<dbReference type="InterPro" id="IPR005225">
    <property type="entry name" value="Small_GTP-bd"/>
</dbReference>
<dbReference type="InterPro" id="IPR000795">
    <property type="entry name" value="T_Tr_GTP-bd_dom"/>
</dbReference>
<dbReference type="InterPro" id="IPR009000">
    <property type="entry name" value="Transl_B-barrel_sf"/>
</dbReference>
<dbReference type="NCBIfam" id="TIGR00503">
    <property type="entry name" value="prfC"/>
    <property type="match status" value="1"/>
</dbReference>
<dbReference type="NCBIfam" id="NF001964">
    <property type="entry name" value="PRK00741.1"/>
    <property type="match status" value="1"/>
</dbReference>
<dbReference type="NCBIfam" id="TIGR00231">
    <property type="entry name" value="small_GTP"/>
    <property type="match status" value="1"/>
</dbReference>
<dbReference type="PANTHER" id="PTHR43556">
    <property type="entry name" value="PEPTIDE CHAIN RELEASE FACTOR RF3"/>
    <property type="match status" value="1"/>
</dbReference>
<dbReference type="PANTHER" id="PTHR43556:SF2">
    <property type="entry name" value="PEPTIDE CHAIN RELEASE FACTOR RF3"/>
    <property type="match status" value="1"/>
</dbReference>
<dbReference type="Pfam" id="PF22042">
    <property type="entry name" value="EF-G_D2"/>
    <property type="match status" value="1"/>
</dbReference>
<dbReference type="Pfam" id="PF00009">
    <property type="entry name" value="GTP_EFTU"/>
    <property type="match status" value="1"/>
</dbReference>
<dbReference type="Pfam" id="PF16658">
    <property type="entry name" value="RF3_C"/>
    <property type="match status" value="1"/>
</dbReference>
<dbReference type="PRINTS" id="PR00315">
    <property type="entry name" value="ELONGATNFCT"/>
</dbReference>
<dbReference type="SUPFAM" id="SSF54980">
    <property type="entry name" value="EF-G C-terminal domain-like"/>
    <property type="match status" value="1"/>
</dbReference>
<dbReference type="SUPFAM" id="SSF52540">
    <property type="entry name" value="P-loop containing nucleoside triphosphate hydrolases"/>
    <property type="match status" value="1"/>
</dbReference>
<dbReference type="SUPFAM" id="SSF50447">
    <property type="entry name" value="Translation proteins"/>
    <property type="match status" value="1"/>
</dbReference>
<dbReference type="PROSITE" id="PS00301">
    <property type="entry name" value="G_TR_1"/>
    <property type="match status" value="1"/>
</dbReference>
<dbReference type="PROSITE" id="PS51722">
    <property type="entry name" value="G_TR_2"/>
    <property type="match status" value="1"/>
</dbReference>
<keyword id="KW-0963">Cytoplasm</keyword>
<keyword id="KW-0342">GTP-binding</keyword>
<keyword id="KW-0547">Nucleotide-binding</keyword>
<keyword id="KW-0648">Protein biosynthesis</keyword>
<keyword id="KW-1185">Reference proteome</keyword>
<proteinExistence type="inferred from homology"/>
<organism>
    <name type="scientific">Geobacter sulfurreducens (strain ATCC 51573 / DSM 12127 / PCA)</name>
    <dbReference type="NCBI Taxonomy" id="243231"/>
    <lineage>
        <taxon>Bacteria</taxon>
        <taxon>Pseudomonadati</taxon>
        <taxon>Thermodesulfobacteriota</taxon>
        <taxon>Desulfuromonadia</taxon>
        <taxon>Geobacterales</taxon>
        <taxon>Geobacteraceae</taxon>
        <taxon>Geobacter</taxon>
    </lineage>
</organism>